<protein>
    <recommendedName>
        <fullName evidence="1">UPF0597 protein YhaM</fullName>
    </recommendedName>
</protein>
<dbReference type="EMBL" id="CU928163">
    <property type="protein sequence ID" value="CAR14748.1"/>
    <property type="molecule type" value="Genomic_DNA"/>
</dbReference>
<dbReference type="RefSeq" id="YP_002414253.1">
    <property type="nucleotide sequence ID" value="NC_011751.1"/>
</dbReference>
<dbReference type="STRING" id="585056.ECUMN_3594"/>
<dbReference type="KEGG" id="eum:ECUMN_3594"/>
<dbReference type="PATRIC" id="fig|585056.7.peg.3771"/>
<dbReference type="HOGENOM" id="CLU_051840_0_0_6"/>
<dbReference type="Proteomes" id="UP000007097">
    <property type="component" value="Chromosome"/>
</dbReference>
<dbReference type="GO" id="GO:0080146">
    <property type="term" value="F:L-cysteine desulfhydrase activity"/>
    <property type="evidence" value="ECO:0007669"/>
    <property type="project" value="TreeGrafter"/>
</dbReference>
<dbReference type="GO" id="GO:0019450">
    <property type="term" value="P:L-cysteine catabolic process to pyruvate"/>
    <property type="evidence" value="ECO:0007669"/>
    <property type="project" value="TreeGrafter"/>
</dbReference>
<dbReference type="HAMAP" id="MF_01845">
    <property type="entry name" value="UPF0597"/>
    <property type="match status" value="1"/>
</dbReference>
<dbReference type="InterPro" id="IPR005130">
    <property type="entry name" value="Ser_deHydtase-like_asu"/>
</dbReference>
<dbReference type="InterPro" id="IPR021144">
    <property type="entry name" value="UPF0597"/>
</dbReference>
<dbReference type="PANTHER" id="PTHR30501">
    <property type="entry name" value="UPF0597 PROTEIN YHAM"/>
    <property type="match status" value="1"/>
</dbReference>
<dbReference type="PANTHER" id="PTHR30501:SF2">
    <property type="entry name" value="UPF0597 PROTEIN YHAM"/>
    <property type="match status" value="1"/>
</dbReference>
<dbReference type="Pfam" id="PF03313">
    <property type="entry name" value="SDH_alpha"/>
    <property type="match status" value="1"/>
</dbReference>
<dbReference type="PIRSF" id="PIRSF006054">
    <property type="entry name" value="UCP006054"/>
    <property type="match status" value="1"/>
</dbReference>
<proteinExistence type="inferred from homology"/>
<organism>
    <name type="scientific">Escherichia coli O17:K52:H18 (strain UMN026 / ExPEC)</name>
    <dbReference type="NCBI Taxonomy" id="585056"/>
    <lineage>
        <taxon>Bacteria</taxon>
        <taxon>Pseudomonadati</taxon>
        <taxon>Pseudomonadota</taxon>
        <taxon>Gammaproteobacteria</taxon>
        <taxon>Enterobacterales</taxon>
        <taxon>Enterobacteriaceae</taxon>
        <taxon>Escherichia</taxon>
    </lineage>
</organism>
<reference key="1">
    <citation type="journal article" date="2009" name="PLoS Genet.">
        <title>Organised genome dynamics in the Escherichia coli species results in highly diverse adaptive paths.</title>
        <authorList>
            <person name="Touchon M."/>
            <person name="Hoede C."/>
            <person name="Tenaillon O."/>
            <person name="Barbe V."/>
            <person name="Baeriswyl S."/>
            <person name="Bidet P."/>
            <person name="Bingen E."/>
            <person name="Bonacorsi S."/>
            <person name="Bouchier C."/>
            <person name="Bouvet O."/>
            <person name="Calteau A."/>
            <person name="Chiapello H."/>
            <person name="Clermont O."/>
            <person name="Cruveiller S."/>
            <person name="Danchin A."/>
            <person name="Diard M."/>
            <person name="Dossat C."/>
            <person name="Karoui M.E."/>
            <person name="Frapy E."/>
            <person name="Garry L."/>
            <person name="Ghigo J.M."/>
            <person name="Gilles A.M."/>
            <person name="Johnson J."/>
            <person name="Le Bouguenec C."/>
            <person name="Lescat M."/>
            <person name="Mangenot S."/>
            <person name="Martinez-Jehanne V."/>
            <person name="Matic I."/>
            <person name="Nassif X."/>
            <person name="Oztas S."/>
            <person name="Petit M.A."/>
            <person name="Pichon C."/>
            <person name="Rouy Z."/>
            <person name="Ruf C.S."/>
            <person name="Schneider D."/>
            <person name="Tourret J."/>
            <person name="Vacherie B."/>
            <person name="Vallenet D."/>
            <person name="Medigue C."/>
            <person name="Rocha E.P.C."/>
            <person name="Denamur E."/>
        </authorList>
    </citation>
    <scope>NUCLEOTIDE SEQUENCE [LARGE SCALE GENOMIC DNA]</scope>
    <source>
        <strain>UMN026 / ExPEC</strain>
    </source>
</reference>
<evidence type="ECO:0000255" key="1">
    <source>
        <dbReference type="HAMAP-Rule" id="MF_01845"/>
    </source>
</evidence>
<feature type="chain" id="PRO_1000188458" description="UPF0597 protein YhaM">
    <location>
        <begin position="1"/>
        <end position="436"/>
    </location>
</feature>
<sequence>MFDSTLNPLWQRYILAVQEEVKPALGCTEPISLALAAAVAAAELEGPVERVEAWVSPNLMKNGLGVTVPGTGMVGLPIAAALGALGGNANAGLEVLKDATAQAIADAKALLAAGKVSVKIQEPCDEILFSRAKVWNGEKWACVTIVGGHTNIVHIETHNGVVFTQQACVTEGEQESPLTVLSRTTLAEILKFVNEVPFAAIRFILDSAKLNCALSQEGLSGNWGLHIGATLEKQCARGLLAKDLSSSIVIRTSAASDARMGGATLPAMSNSGSGNQGITATMPVVVVAEHFGADDERLARALMLSHLSAIYIHNQLPRLSALCAATTAAMGAAAGMAWLVDGRYETISMAISSMIGDVSGMICDGASNSCAMKVSTSASAAWKAVLMALDDTAVTGNEGIVAHDVEQSIANLCALASHSMQQTDRQIIEIMASKAR</sequence>
<name>YHAM_ECOLU</name>
<gene>
    <name evidence="1" type="primary">yhaM</name>
    <name type="ordered locus">ECUMN_3594</name>
</gene>
<accession>B7ND98</accession>
<comment type="similarity">
    <text evidence="1">Belongs to the UPF0597 family.</text>
</comment>